<comment type="subunit">
    <text evidence="1">Forms oligomers.</text>
</comment>
<comment type="subcellular location">
    <subcellularLocation>
        <location evidence="1">Cytoplasm</location>
        <location evidence="1">Nucleoid</location>
    </subcellularLocation>
</comment>
<comment type="similarity">
    <text evidence="1">Belongs to the MraZ family.</text>
</comment>
<dbReference type="EMBL" id="CP000412">
    <property type="protein sequence ID" value="ABJ58294.1"/>
    <property type="molecule type" value="Genomic_DNA"/>
</dbReference>
<dbReference type="RefSeq" id="WP_003619156.1">
    <property type="nucleotide sequence ID" value="NC_008529.1"/>
</dbReference>
<dbReference type="SMR" id="Q04B78"/>
<dbReference type="KEGG" id="lbu:LBUL_0668"/>
<dbReference type="HOGENOM" id="CLU_107907_0_5_9"/>
<dbReference type="BioCyc" id="LDEL321956:LBUL_RS03185-MONOMER"/>
<dbReference type="GO" id="GO:0005737">
    <property type="term" value="C:cytoplasm"/>
    <property type="evidence" value="ECO:0007669"/>
    <property type="project" value="UniProtKB-UniRule"/>
</dbReference>
<dbReference type="GO" id="GO:0009295">
    <property type="term" value="C:nucleoid"/>
    <property type="evidence" value="ECO:0007669"/>
    <property type="project" value="UniProtKB-SubCell"/>
</dbReference>
<dbReference type="GO" id="GO:0003700">
    <property type="term" value="F:DNA-binding transcription factor activity"/>
    <property type="evidence" value="ECO:0007669"/>
    <property type="project" value="UniProtKB-UniRule"/>
</dbReference>
<dbReference type="GO" id="GO:0000976">
    <property type="term" value="F:transcription cis-regulatory region binding"/>
    <property type="evidence" value="ECO:0007669"/>
    <property type="project" value="TreeGrafter"/>
</dbReference>
<dbReference type="GO" id="GO:2000143">
    <property type="term" value="P:negative regulation of DNA-templated transcription initiation"/>
    <property type="evidence" value="ECO:0007669"/>
    <property type="project" value="TreeGrafter"/>
</dbReference>
<dbReference type="CDD" id="cd16321">
    <property type="entry name" value="MraZ_C"/>
    <property type="match status" value="1"/>
</dbReference>
<dbReference type="CDD" id="cd16320">
    <property type="entry name" value="MraZ_N"/>
    <property type="match status" value="1"/>
</dbReference>
<dbReference type="FunFam" id="3.40.1550.20:FF:000002">
    <property type="entry name" value="Transcriptional regulator MraZ"/>
    <property type="match status" value="1"/>
</dbReference>
<dbReference type="Gene3D" id="3.40.1550.20">
    <property type="entry name" value="Transcriptional regulator MraZ domain"/>
    <property type="match status" value="1"/>
</dbReference>
<dbReference type="HAMAP" id="MF_01008">
    <property type="entry name" value="MraZ"/>
    <property type="match status" value="1"/>
</dbReference>
<dbReference type="InterPro" id="IPR003444">
    <property type="entry name" value="MraZ"/>
</dbReference>
<dbReference type="InterPro" id="IPR035644">
    <property type="entry name" value="MraZ_C"/>
</dbReference>
<dbReference type="InterPro" id="IPR020603">
    <property type="entry name" value="MraZ_dom"/>
</dbReference>
<dbReference type="InterPro" id="IPR035642">
    <property type="entry name" value="MraZ_N"/>
</dbReference>
<dbReference type="InterPro" id="IPR038619">
    <property type="entry name" value="MraZ_sf"/>
</dbReference>
<dbReference type="InterPro" id="IPR007159">
    <property type="entry name" value="SpoVT-AbrB_dom"/>
</dbReference>
<dbReference type="InterPro" id="IPR037914">
    <property type="entry name" value="SpoVT-AbrB_sf"/>
</dbReference>
<dbReference type="NCBIfam" id="TIGR00242">
    <property type="entry name" value="division/cell wall cluster transcriptional repressor MraZ"/>
    <property type="match status" value="1"/>
</dbReference>
<dbReference type="PANTHER" id="PTHR34701">
    <property type="entry name" value="TRANSCRIPTIONAL REGULATOR MRAZ"/>
    <property type="match status" value="1"/>
</dbReference>
<dbReference type="PANTHER" id="PTHR34701:SF1">
    <property type="entry name" value="TRANSCRIPTIONAL REGULATOR MRAZ"/>
    <property type="match status" value="1"/>
</dbReference>
<dbReference type="Pfam" id="PF02381">
    <property type="entry name" value="MraZ"/>
    <property type="match status" value="2"/>
</dbReference>
<dbReference type="SUPFAM" id="SSF89447">
    <property type="entry name" value="AbrB/MazE/MraZ-like"/>
    <property type="match status" value="1"/>
</dbReference>
<dbReference type="PROSITE" id="PS51740">
    <property type="entry name" value="SPOVT_ABRB"/>
    <property type="match status" value="2"/>
</dbReference>
<sequence>MFMGEYQHNLDAKGRLIIPAKLREQIGPAMVLTRGMEGCIFGYPLTEWAKIEAKLAKLPLTKKNARSFTRMFYSGAMEGEFDKQGRINLSPTLKKHAGLVKECVIVGVSNRIEIWAKERWEEYSDEANESYDEIAEDLDDIEL</sequence>
<gene>
    <name evidence="1" type="primary">mraZ</name>
    <name type="ordered locus">LBUL_0668</name>
</gene>
<reference key="1">
    <citation type="journal article" date="2006" name="Proc. Natl. Acad. Sci. U.S.A.">
        <title>Comparative genomics of the lactic acid bacteria.</title>
        <authorList>
            <person name="Makarova K.S."/>
            <person name="Slesarev A."/>
            <person name="Wolf Y.I."/>
            <person name="Sorokin A."/>
            <person name="Mirkin B."/>
            <person name="Koonin E.V."/>
            <person name="Pavlov A."/>
            <person name="Pavlova N."/>
            <person name="Karamychev V."/>
            <person name="Polouchine N."/>
            <person name="Shakhova V."/>
            <person name="Grigoriev I."/>
            <person name="Lou Y."/>
            <person name="Rohksar D."/>
            <person name="Lucas S."/>
            <person name="Huang K."/>
            <person name="Goodstein D.M."/>
            <person name="Hawkins T."/>
            <person name="Plengvidhya V."/>
            <person name="Welker D."/>
            <person name="Hughes J."/>
            <person name="Goh Y."/>
            <person name="Benson A."/>
            <person name="Baldwin K."/>
            <person name="Lee J.-H."/>
            <person name="Diaz-Muniz I."/>
            <person name="Dosti B."/>
            <person name="Smeianov V."/>
            <person name="Wechter W."/>
            <person name="Barabote R."/>
            <person name="Lorca G."/>
            <person name="Altermann E."/>
            <person name="Barrangou R."/>
            <person name="Ganesan B."/>
            <person name="Xie Y."/>
            <person name="Rawsthorne H."/>
            <person name="Tamir D."/>
            <person name="Parker C."/>
            <person name="Breidt F."/>
            <person name="Broadbent J.R."/>
            <person name="Hutkins R."/>
            <person name="O'Sullivan D."/>
            <person name="Steele J."/>
            <person name="Unlu G."/>
            <person name="Saier M.H. Jr."/>
            <person name="Klaenhammer T."/>
            <person name="Richardson P."/>
            <person name="Kozyavkin S."/>
            <person name="Weimer B.C."/>
            <person name="Mills D.A."/>
        </authorList>
    </citation>
    <scope>NUCLEOTIDE SEQUENCE [LARGE SCALE GENOMIC DNA]</scope>
    <source>
        <strain>ATCC BAA-365 / Lb-18</strain>
    </source>
</reference>
<feature type="chain" id="PRO_1000062888" description="Transcriptional regulator MraZ">
    <location>
        <begin position="1"/>
        <end position="143"/>
    </location>
</feature>
<feature type="domain" description="SpoVT-AbrB 1" evidence="2">
    <location>
        <begin position="5"/>
        <end position="47"/>
    </location>
</feature>
<feature type="domain" description="SpoVT-AbrB 2" evidence="2">
    <location>
        <begin position="76"/>
        <end position="119"/>
    </location>
</feature>
<keyword id="KW-0963">Cytoplasm</keyword>
<keyword id="KW-0238">DNA-binding</keyword>
<keyword id="KW-0677">Repeat</keyword>
<keyword id="KW-0804">Transcription</keyword>
<keyword id="KW-0805">Transcription regulation</keyword>
<evidence type="ECO:0000255" key="1">
    <source>
        <dbReference type="HAMAP-Rule" id="MF_01008"/>
    </source>
</evidence>
<evidence type="ECO:0000255" key="2">
    <source>
        <dbReference type="PROSITE-ProRule" id="PRU01076"/>
    </source>
</evidence>
<proteinExistence type="inferred from homology"/>
<protein>
    <recommendedName>
        <fullName>Transcriptional regulator MraZ</fullName>
    </recommendedName>
</protein>
<accession>Q04B78</accession>
<organism>
    <name type="scientific">Lactobacillus delbrueckii subsp. bulgaricus (strain ATCC BAA-365 / Lb-18)</name>
    <dbReference type="NCBI Taxonomy" id="321956"/>
    <lineage>
        <taxon>Bacteria</taxon>
        <taxon>Bacillati</taxon>
        <taxon>Bacillota</taxon>
        <taxon>Bacilli</taxon>
        <taxon>Lactobacillales</taxon>
        <taxon>Lactobacillaceae</taxon>
        <taxon>Lactobacillus</taxon>
    </lineage>
</organism>
<name>MRAZ_LACDB</name>